<accession>Q9M0Z3</accession>
<accession>A0A0N9DZS1</accession>
<accession>F4JGY3</accession>
<accession>Q9ZS89</accession>
<dbReference type="EMBL" id="KT581346">
    <property type="protein sequence ID" value="ALF35622.1"/>
    <property type="molecule type" value="mRNA"/>
</dbReference>
<dbReference type="EMBL" id="AF118223">
    <property type="protein sequence ID" value="AAD03448.1"/>
    <property type="status" value="ALT_SEQ"/>
    <property type="molecule type" value="Genomic_DNA"/>
</dbReference>
<dbReference type="EMBL" id="AL161501">
    <property type="protein sequence ID" value="CAB80850.1"/>
    <property type="status" value="ALT_SEQ"/>
    <property type="molecule type" value="Genomic_DNA"/>
</dbReference>
<dbReference type="EMBL" id="CP002687">
    <property type="protein sequence ID" value="AEE82432.1"/>
    <property type="molecule type" value="Genomic_DNA"/>
</dbReference>
<dbReference type="EMBL" id="CP002687">
    <property type="protein sequence ID" value="AEE82433.1"/>
    <property type="molecule type" value="Genomic_DNA"/>
</dbReference>
<dbReference type="EMBL" id="AY051006">
    <property type="status" value="NOT_ANNOTATED_CDS"/>
    <property type="molecule type" value="mRNA"/>
</dbReference>
<dbReference type="PIR" id="A85061">
    <property type="entry name" value="A85061"/>
</dbReference>
<dbReference type="RefSeq" id="NP_001190675.1">
    <molecule id="Q9M0Z3-1"/>
    <property type="nucleotide sequence ID" value="NM_001203746.1"/>
</dbReference>
<dbReference type="RefSeq" id="NP_567272.4">
    <molecule id="Q9M0Z3-3"/>
    <property type="nucleotide sequence ID" value="NM_116723.5"/>
</dbReference>
<dbReference type="SMR" id="Q9M0Z3"/>
<dbReference type="BioGRID" id="11133">
    <property type="interactions" value="4"/>
</dbReference>
<dbReference type="FunCoup" id="Q9M0Z3">
    <property type="interactions" value="526"/>
</dbReference>
<dbReference type="STRING" id="3702.Q9M0Z3"/>
<dbReference type="TCDB" id="2.A.37.1.6">
    <property type="family name" value="the monovalent cation:proton antiporter-2 (cpa2) family"/>
</dbReference>
<dbReference type="PaxDb" id="3702-AT4G04850.2"/>
<dbReference type="ProteomicsDB" id="237042">
    <molecule id="Q9M0Z3-1"/>
</dbReference>
<dbReference type="EnsemblPlants" id="AT4G04850.1">
    <molecule id="Q9M0Z3-3"/>
    <property type="protein sequence ID" value="AT4G04850.1"/>
    <property type="gene ID" value="AT4G04850"/>
</dbReference>
<dbReference type="EnsemblPlants" id="AT4G04850.2">
    <molecule id="Q9M0Z3-1"/>
    <property type="protein sequence ID" value="AT4G04850.2"/>
    <property type="gene ID" value="AT4G04850"/>
</dbReference>
<dbReference type="GeneID" id="825822"/>
<dbReference type="Gramene" id="AT4G04850.1">
    <molecule id="Q9M0Z3-3"/>
    <property type="protein sequence ID" value="AT4G04850.1"/>
    <property type="gene ID" value="AT4G04850"/>
</dbReference>
<dbReference type="Gramene" id="AT4G04850.2">
    <molecule id="Q9M0Z3-1"/>
    <property type="protein sequence ID" value="AT4G04850.2"/>
    <property type="gene ID" value="AT4G04850"/>
</dbReference>
<dbReference type="KEGG" id="ath:AT4G04850"/>
<dbReference type="Araport" id="AT4G04850"/>
<dbReference type="TAIR" id="AT4G04850">
    <property type="gene designation" value="KEA3"/>
</dbReference>
<dbReference type="eggNOG" id="KOG1650">
    <property type="taxonomic scope" value="Eukaryota"/>
</dbReference>
<dbReference type="InParanoid" id="Q9M0Z3"/>
<dbReference type="OMA" id="MRWWLTL"/>
<dbReference type="PhylomeDB" id="Q9M0Z3"/>
<dbReference type="PRO" id="PR:Q9M0Z3"/>
<dbReference type="Proteomes" id="UP000006548">
    <property type="component" value="Chromosome 4"/>
</dbReference>
<dbReference type="ExpressionAtlas" id="Q9M0Z3">
    <property type="expression patterns" value="baseline and differential"/>
</dbReference>
<dbReference type="GO" id="GO:0009507">
    <property type="term" value="C:chloroplast"/>
    <property type="evidence" value="ECO:0000314"/>
    <property type="project" value="TAIR"/>
</dbReference>
<dbReference type="GO" id="GO:0031969">
    <property type="term" value="C:chloroplast membrane"/>
    <property type="evidence" value="ECO:0007669"/>
    <property type="project" value="UniProtKB-SubCell"/>
</dbReference>
<dbReference type="GO" id="GO:0009535">
    <property type="term" value="C:chloroplast thylakoid membrane"/>
    <property type="evidence" value="ECO:0000314"/>
    <property type="project" value="TAIR"/>
</dbReference>
<dbReference type="GO" id="GO:0000139">
    <property type="term" value="C:Golgi membrane"/>
    <property type="evidence" value="ECO:0007669"/>
    <property type="project" value="UniProtKB-SubCell"/>
</dbReference>
<dbReference type="GO" id="GO:0042651">
    <property type="term" value="C:thylakoid membrane"/>
    <property type="evidence" value="ECO:0000314"/>
    <property type="project" value="UniProtKB"/>
</dbReference>
<dbReference type="GO" id="GO:0015297">
    <property type="term" value="F:antiporter activity"/>
    <property type="evidence" value="ECO:0007669"/>
    <property type="project" value="UniProtKB-KW"/>
</dbReference>
<dbReference type="GO" id="GO:0019722">
    <property type="term" value="P:calcium-mediated signaling"/>
    <property type="evidence" value="ECO:0000315"/>
    <property type="project" value="UniProtKB"/>
</dbReference>
<dbReference type="GO" id="GO:0009658">
    <property type="term" value="P:chloroplast organization"/>
    <property type="evidence" value="ECO:0000316"/>
    <property type="project" value="TAIR"/>
</dbReference>
<dbReference type="GO" id="GO:0010196">
    <property type="term" value="P:nonphotochemical quenching"/>
    <property type="evidence" value="ECO:0000315"/>
    <property type="project" value="UniProtKB"/>
</dbReference>
<dbReference type="GO" id="GO:0009643">
    <property type="term" value="P:photosynthetic acclimation"/>
    <property type="evidence" value="ECO:0000315"/>
    <property type="project" value="TAIR"/>
</dbReference>
<dbReference type="GO" id="GO:1905157">
    <property type="term" value="P:positive regulation of photosynthesis"/>
    <property type="evidence" value="ECO:0000315"/>
    <property type="project" value="UniProtKB"/>
</dbReference>
<dbReference type="GO" id="GO:0006813">
    <property type="term" value="P:potassium ion transport"/>
    <property type="evidence" value="ECO:0007669"/>
    <property type="project" value="UniProtKB-KW"/>
</dbReference>
<dbReference type="GO" id="GO:1902600">
    <property type="term" value="P:proton transmembrane transport"/>
    <property type="evidence" value="ECO:0007669"/>
    <property type="project" value="InterPro"/>
</dbReference>
<dbReference type="GO" id="GO:1900069">
    <property type="term" value="P:regulation of cellular hyperosmotic salinity response"/>
    <property type="evidence" value="ECO:0000315"/>
    <property type="project" value="UniProtKB"/>
</dbReference>
<dbReference type="GO" id="GO:0010109">
    <property type="term" value="P:regulation of photosynthesis"/>
    <property type="evidence" value="ECO:0000316"/>
    <property type="project" value="TAIR"/>
</dbReference>
<dbReference type="GO" id="GO:0009644">
    <property type="term" value="P:response to high light intensity"/>
    <property type="evidence" value="ECO:0000315"/>
    <property type="project" value="UniProtKB"/>
</dbReference>
<dbReference type="FunFam" id="3.40.50.720:FF:000036">
    <property type="entry name" value="Glutathione-regulated potassium-efflux system protein KefB"/>
    <property type="match status" value="1"/>
</dbReference>
<dbReference type="FunFam" id="1.20.1530.20:FF:000011">
    <property type="entry name" value="K(+) efflux antiporter 3, chloroplastic"/>
    <property type="match status" value="1"/>
</dbReference>
<dbReference type="Gene3D" id="1.20.1530.20">
    <property type="match status" value="1"/>
</dbReference>
<dbReference type="Gene3D" id="3.40.50.720">
    <property type="entry name" value="NAD(P)-binding Rossmann-like Domain"/>
    <property type="match status" value="1"/>
</dbReference>
<dbReference type="InterPro" id="IPR006153">
    <property type="entry name" value="Cation/H_exchanger_TM"/>
</dbReference>
<dbReference type="InterPro" id="IPR038770">
    <property type="entry name" value="Na+/solute_symporter_sf"/>
</dbReference>
<dbReference type="InterPro" id="IPR036291">
    <property type="entry name" value="NAD(P)-bd_dom_sf"/>
</dbReference>
<dbReference type="InterPro" id="IPR003148">
    <property type="entry name" value="RCK_N"/>
</dbReference>
<dbReference type="PANTHER" id="PTHR46157">
    <property type="entry name" value="K(+) EFFLUX ANTIPORTER 3, CHLOROPLASTIC"/>
    <property type="match status" value="1"/>
</dbReference>
<dbReference type="PANTHER" id="PTHR46157:SF4">
    <property type="entry name" value="K(+) EFFLUX ANTIPORTER 3, CHLOROPLASTIC"/>
    <property type="match status" value="1"/>
</dbReference>
<dbReference type="Pfam" id="PF00999">
    <property type="entry name" value="Na_H_Exchanger"/>
    <property type="match status" value="1"/>
</dbReference>
<dbReference type="Pfam" id="PF02254">
    <property type="entry name" value="TrkA_N"/>
    <property type="match status" value="1"/>
</dbReference>
<dbReference type="SUPFAM" id="SSF51735">
    <property type="entry name" value="NAD(P)-binding Rossmann-fold domains"/>
    <property type="match status" value="1"/>
</dbReference>
<dbReference type="PROSITE" id="PS51201">
    <property type="entry name" value="RCK_N"/>
    <property type="match status" value="1"/>
</dbReference>
<proteinExistence type="evidence at protein level"/>
<comment type="function">
    <molecule>Isoform 1</molecule>
    <text evidence="5 7 8 9 10 11 12 13 14 15 16">Electroneutral K(+)/H(+) efflux antiporter assuring proton efflux from the thylakoid lumen to the plastid stroma, thus increasing the membrane potential at the expense of the proton gradient (delta pH) component of the proton motive force (PMF) (PubMed:24278440, PubMed:25451040, PubMed:27783435, PubMed:31053658, PubMed:31296940, PubMed:31427465). Promotes photosynthesis and growth in conditions where the chloroplast (cp)ATP synthase activity is low (e.g. cgl160 mutant background) by reducing the pH gradient across the thylakoid membrane (PubMed:32041909). Accelerates photosynthetic acclimation in fluctuating light environments by modulating two components of the proton motive force, the proton gradient and the electric potential (delta Psi) (PubMed:25451040, PubMed:27335350, PubMed:27783435, PubMed:31053658, PubMed:31427465). Promotes the relaxation of photoprotective energy-dependent non-photochemical quenching (NPQ) after transitions from high to low light, thus enhancing photosystem II (PSII) quantum efficiency in fluctuating light (PubMed:27335350). On transition from high to low light, slows down photoprotection by dissipating the pH gradient across the thylakoid membrane (PubMed:31201341). During photosynthetic response on transition from dark to low light, involved in a sequential mechanism of adaptation; VCCN1 and CLCe first trigger the activation of photoprotection, which is later down-regulated by KEA3 to a low steady state, while adjusting electron transport (PubMed:31201341). Together with the chloroplast NADH dehydrogenase-like (NDH) complex, maximizes photosynthesis efficiency after a long dark adaptation (PubMed:32978277). Required in roots for rapid hyperosmotic-induced Ca(2+) responses and for osmo-sensory potentiation in hyperosmotic conditions (PubMed:27528686).</text>
</comment>
<comment type="function">
    <molecule>Isoform 3</molecule>
    <text evidence="8 13">Low K(+)/H(+) efflux antiporter activity.</text>
</comment>
<comment type="function">
    <molecule>Isoform 4</molecule>
    <text evidence="8 13">Low K(+)/H(+) efflux antiporter activity (PubMed:31296940). Promotes non-photochemical quenching (NPQ) in high light conditions (PubMed:27335350).</text>
</comment>
<comment type="catalytic activity">
    <reaction evidence="5 13">
        <text>K(+)(in) + H(+)(out) = K(+)(out) + H(+)(in)</text>
        <dbReference type="Rhea" id="RHEA:29467"/>
        <dbReference type="ChEBI" id="CHEBI:15378"/>
        <dbReference type="ChEBI" id="CHEBI:29103"/>
    </reaction>
</comment>
<comment type="activity regulation">
    <text evidence="8">Regulated by a mechanism involving lumenal C-terminus region; a fine-tuned balance between photoprotective energy dissipation in high light and a maximum quantum yield in low light involves a reduced activity under high light.</text>
</comment>
<comment type="biophysicochemical properties">
    <phDependence>
        <text evidence="5">Optimum pH is 5.8.</text>
    </phDependence>
</comment>
<comment type="subcellular location">
    <subcellularLocation>
        <location evidence="4">Plastid</location>
        <location evidence="4">Chloroplast membrane</location>
        <topology evidence="1">Multi-pass membrane protein</topology>
    </subcellularLocation>
    <subcellularLocation>
        <location evidence="5">Golgi apparatus membrane</location>
        <topology evidence="1">Multi-pass membrane protein</topology>
    </subcellularLocation>
    <subcellularLocation>
        <location evidence="6 7 10 11 15">Plastid</location>
        <location evidence="6 7 10 11 15">Chloroplast thylakoid membrane</location>
        <topology evidence="1">Multi-pass membrane protein</topology>
    </subcellularLocation>
    <text evidence="7">Enriched in the stromal lamellae.</text>
</comment>
<comment type="alternative products">
    <event type="alternative splicing"/>
    <isoform>
        <id>Q9M0Z3-1</id>
        <name>1</name>
        <name evidence="19">KEA3.2</name>
        <sequence type="displayed"/>
    </isoform>
    <isoform>
        <id>Q9M0Z3-2</id>
        <name>2</name>
        <sequence type="described" ref="VSP_039359 VSP_039360 VSP_039361 VSP_039362"/>
    </isoform>
    <isoform>
        <id>Q9M0Z3-3</id>
        <name>3</name>
        <name evidence="19">KEA3.1</name>
        <sequence type="described" ref="VSP_039361 VSP_039362"/>
    </isoform>
    <isoform>
        <id>Q9M0Z3-4</id>
        <name>4</name>
        <name evidence="19">KEA3.3</name>
        <sequence type="described" ref="VSP_061802 VSP_061803"/>
    </isoform>
</comment>
<comment type="tissue specificity">
    <molecule>Isoform 3</molecule>
    <text evidence="8">Expressed at low levels in flowers, siliques and leaves.</text>
</comment>
<comment type="tissue specificity">
    <molecule>Isoform 4</molecule>
    <text evidence="8">Expressed at low levels in flowers and leaves.</text>
</comment>
<comment type="tissue specificity">
    <molecule>Isoform 1</molecule>
    <text evidence="8 11">Most abundant splice form in all organs, including siliques, flowers, leaves and roots (PubMed:27335350). Preferentially expressed in photosynthetically active tissues, including seedling cotyledons and mature leaves (PubMed:31053658).</text>
</comment>
<comment type="tissue specificity">
    <text evidence="5">Expressed in shoots and roots.</text>
</comment>
<comment type="induction">
    <text evidence="5">Up-regulated by low K(+) stress.</text>
</comment>
<comment type="disruption phenotype">
    <text evidence="6 7 8 9 10 11 12 14 15 16">No visible phenotype (PubMed:24794527, PubMed:25451040, PubMed:31201341). Impaired rapid hyperosmotic-induced Ca(2+) responses in kea3 (PubMed:25451040, PubMed:27528686). Altered non-photochemical quenching (NPQ) and photosystem II (PSII) quantum efficiency after transitions from high to low light leading to a reduced growth rate (PubMed:27335350, PubMed:31053658, PubMed:31427465). Transiently increased NPQ upon transition from dark to low light (PubMed:31201341). Slightly faster NPQ induction on transition from low to high light (PubMed:31201341). Delayed NPQ relax on transition from high to low light (PubMed:31201341). In contrast to dpgr, the mutant kea3 has a high-NPQ phenotype during steady state in ambient air (PubMed:27783435). The kea3 pgr5 double mutant combines the phenotypes of the single mutants in NPQ induction upon overnight dark adaptation (PubMed:32978277). The double mutant crr2 kea3 enhances the kea3 single mutant phenotypes, and delays induction of CO(2) fixation after overnight dark adaptation (PubMed:32978277). Triple mutants kea1 kea2 kea3 are extremely stunted in size with entirely pale leaves and died before steeing seeds (PubMed:24794527). Lower photosynthetic performance in dark-adapted clce kea3 double mutant, as well as in the clce kea3 vccn1 triple mutant (PubMed:31201341). Altered NPQ upon transition from dark to low light in clce kea3 and kea3 vccn1 double mutants and in the clce kea3 vccn1 triple mutant (PubMed:31201341). Strong growth penalty in the cgl160 kea3 double mutant associated with a low lumenal pH leading to a reduced photosynthetic capacity (PubMed:32041909).</text>
</comment>
<comment type="similarity">
    <text evidence="22">Belongs to the monovalent cation:proton antiporter 2 (CPA2) transporter (TC 2.A.37) family. KEA (TC 2.A.37.1) subfamily.</text>
</comment>
<comment type="caution">
    <text evidence="23">Topology may be in opposite way (PubMed:27335350).</text>
</comment>
<comment type="sequence caution" evidence="22">
    <conflict type="erroneous gene model prediction">
        <sequence resource="EMBL-CDS" id="AAD03448"/>
    </conflict>
</comment>
<comment type="sequence caution" evidence="22">
    <conflict type="frameshift">
        <sequence resource="EMBL" id="AY051006"/>
    </conflict>
</comment>
<comment type="sequence caution" evidence="22">
    <conflict type="erroneous gene model prediction">
        <sequence resource="EMBL-CDS" id="CAB80850"/>
    </conflict>
</comment>
<name>KEA3_ARATH</name>
<organism>
    <name type="scientific">Arabidopsis thaliana</name>
    <name type="common">Mouse-ear cress</name>
    <dbReference type="NCBI Taxonomy" id="3702"/>
    <lineage>
        <taxon>Eukaryota</taxon>
        <taxon>Viridiplantae</taxon>
        <taxon>Streptophyta</taxon>
        <taxon>Embryophyta</taxon>
        <taxon>Tracheophyta</taxon>
        <taxon>Spermatophyta</taxon>
        <taxon>Magnoliopsida</taxon>
        <taxon>eudicotyledons</taxon>
        <taxon>Gunneridae</taxon>
        <taxon>Pentapetalae</taxon>
        <taxon>rosids</taxon>
        <taxon>malvids</taxon>
        <taxon>Brassicales</taxon>
        <taxon>Brassicaceae</taxon>
        <taxon>Camelineae</taxon>
        <taxon>Arabidopsis</taxon>
    </lineage>
</organism>
<sequence length="776" mass="83791">MAISTMLGSISCCPSPKGYEMVKQHSVRLKHCVFTVKSSVPVYSEGVNDGIKLHSFGNLVKKKVFLDTSKRFYFQGRWSESSGRRVETYAGVDVASAVDVINDLGFDTLTFLMVTVIIVPAFRILKASPILGFFFAGVVLNQFGLIRNLTDVKVLSEWGILFLLFEMGLELSLARLKALAKFAFGMGLTQVLLCTAAFTAFELPPNGAIGTKILEFLFHSRPDLVNIRSIDEAVVIGAALSLSSSAFVLQLLAEKGELPTRFGSATLGILLLQDIAVVPLLVILPVLESQDIGGESIWPMLAKESAKALGGLGILSLGGKFFLRRIFEVVAETRSSEAFVALCLLTVAGTSLVTQWLGFSDTLGAFLAGALLAETNFRTQIEADIRPFRGLLLGLFFVTTGTSIDMEVLFREWPNVLSLLGGLIVIKTLIITAIGPRVGLTIQESVRVGFLLSQGGEFAFVVFSLANRLGVLPNELNKLLIIVVVLSMALTPYLNQLGRKAADFLDERLDPGEKIGEDVNFDVSESIVIIGFGQMGQVLANFLSTPLVSDSDLVGWPYIGFDLNPAVVKESRKLGFPILYGDGSRPSVLQSAGVSSPKAIMIMYKGKKRTTEAVQRLRLAFPGSPIYARAQDLPHLLELKKAGATDAILENAETSLQLGSKLLTGFGVMSDDVSFLSKVFRDSMEIQAQEEITASETNAGLKPMQMKASDINVVSAATQKQVQLMKPMQMKASDSNSDSAAEILQETAGLSQPPEIDDSSVNIDNGFVGKADKAQD</sequence>
<keyword id="KW-0025">Alternative splicing</keyword>
<keyword id="KW-0050">Antiport</keyword>
<keyword id="KW-0150">Chloroplast</keyword>
<keyword id="KW-0333">Golgi apparatus</keyword>
<keyword id="KW-0406">Ion transport</keyword>
<keyword id="KW-0472">Membrane</keyword>
<keyword id="KW-0934">Plastid</keyword>
<keyword id="KW-0630">Potassium</keyword>
<keyword id="KW-0633">Potassium transport</keyword>
<keyword id="KW-1185">Reference proteome</keyword>
<keyword id="KW-0793">Thylakoid</keyword>
<keyword id="KW-0809">Transit peptide</keyword>
<keyword id="KW-0812">Transmembrane</keyword>
<keyword id="KW-1133">Transmembrane helix</keyword>
<keyword id="KW-0813">Transport</keyword>
<protein>
    <recommendedName>
        <fullName evidence="17">K(+) efflux antiporter 3, chloroplastic</fullName>
        <shortName evidence="17">AtKEA3</shortName>
    </recommendedName>
    <alternativeName>
        <fullName evidence="20">Protein DISTURBED PROTON GRADIENT REGULATION</fullName>
    </alternativeName>
</protein>
<gene>
    <name evidence="17 21" type="primary">KEA3</name>
    <name evidence="20" type="synonym">DPGR</name>
    <name evidence="25" type="ordered locus">At4g04850</name>
    <name evidence="26" type="ORF">T4B21.3</name>
</gene>
<reference key="1">
    <citation type="journal article" date="2016" name="Plant Cell Physiol.">
        <title>Regulation and levels of the thylakoid K+/H+ antiporter KEA3 shape the dynamic response of photosynthesis in fluctuating light.</title>
        <authorList>
            <person name="Armbruster U."/>
            <person name="Leonelli L."/>
            <person name="Correa Galvis V."/>
            <person name="Strand D."/>
            <person name="Quinn E.H."/>
            <person name="Jonikas M.C."/>
            <person name="Niyogi K.K."/>
        </authorList>
    </citation>
    <scope>NUCLEOTIDE SEQUENCE [MRNA] (ISOFORM 4)</scope>
    <scope>FUNCTION</scope>
    <scope>DISRUPTION PHENOTYPE</scope>
    <scope>ACTIVITY REGULATION</scope>
    <scope>TISSUE SPECIFICITY</scope>
    <scope>TOPOLOGY</scope>
    <source>
        <strain>cv. Columbia</strain>
        <tissue>Leaf</tissue>
    </source>
</reference>
<reference key="2">
    <citation type="journal article" date="1999" name="Nature">
        <title>Sequence and analysis of chromosome 4 of the plant Arabidopsis thaliana.</title>
        <authorList>
            <person name="Mayer K.F.X."/>
            <person name="Schueller C."/>
            <person name="Wambutt R."/>
            <person name="Murphy G."/>
            <person name="Volckaert G."/>
            <person name="Pohl T."/>
            <person name="Duesterhoeft A."/>
            <person name="Stiekema W."/>
            <person name="Entian K.-D."/>
            <person name="Terryn N."/>
            <person name="Harris B."/>
            <person name="Ansorge W."/>
            <person name="Brandt P."/>
            <person name="Grivell L.A."/>
            <person name="Rieger M."/>
            <person name="Weichselgartner M."/>
            <person name="de Simone V."/>
            <person name="Obermaier B."/>
            <person name="Mache R."/>
            <person name="Mueller M."/>
            <person name="Kreis M."/>
            <person name="Delseny M."/>
            <person name="Puigdomenech P."/>
            <person name="Watson M."/>
            <person name="Schmidtheini T."/>
            <person name="Reichert B."/>
            <person name="Portetelle D."/>
            <person name="Perez-Alonso M."/>
            <person name="Boutry M."/>
            <person name="Bancroft I."/>
            <person name="Vos P."/>
            <person name="Hoheisel J."/>
            <person name="Zimmermann W."/>
            <person name="Wedler H."/>
            <person name="Ridley P."/>
            <person name="Langham S.-A."/>
            <person name="McCullagh B."/>
            <person name="Bilham L."/>
            <person name="Robben J."/>
            <person name="van der Schueren J."/>
            <person name="Grymonprez B."/>
            <person name="Chuang Y.-J."/>
            <person name="Vandenbussche F."/>
            <person name="Braeken M."/>
            <person name="Weltjens I."/>
            <person name="Voet M."/>
            <person name="Bastiaens I."/>
            <person name="Aert R."/>
            <person name="Defoor E."/>
            <person name="Weitzenegger T."/>
            <person name="Bothe G."/>
            <person name="Ramsperger U."/>
            <person name="Hilbert H."/>
            <person name="Braun M."/>
            <person name="Holzer E."/>
            <person name="Brandt A."/>
            <person name="Peters S."/>
            <person name="van Staveren M."/>
            <person name="Dirkse W."/>
            <person name="Mooijman P."/>
            <person name="Klein Lankhorst R."/>
            <person name="Rose M."/>
            <person name="Hauf J."/>
            <person name="Koetter P."/>
            <person name="Berneiser S."/>
            <person name="Hempel S."/>
            <person name="Feldpausch M."/>
            <person name="Lamberth S."/>
            <person name="Van den Daele H."/>
            <person name="De Keyser A."/>
            <person name="Buysshaert C."/>
            <person name="Gielen J."/>
            <person name="Villarroel R."/>
            <person name="De Clercq R."/>
            <person name="van Montagu M."/>
            <person name="Rogers J."/>
            <person name="Cronin A."/>
            <person name="Quail M.A."/>
            <person name="Bray-Allen S."/>
            <person name="Clark L."/>
            <person name="Doggett J."/>
            <person name="Hall S."/>
            <person name="Kay M."/>
            <person name="Lennard N."/>
            <person name="McLay K."/>
            <person name="Mayes R."/>
            <person name="Pettett A."/>
            <person name="Rajandream M.A."/>
            <person name="Lyne M."/>
            <person name="Benes V."/>
            <person name="Rechmann S."/>
            <person name="Borkova D."/>
            <person name="Bloecker H."/>
            <person name="Scharfe M."/>
            <person name="Grimm M."/>
            <person name="Loehnert T.-H."/>
            <person name="Dose S."/>
            <person name="de Haan M."/>
            <person name="Maarse A.C."/>
            <person name="Schaefer M."/>
            <person name="Mueller-Auer S."/>
            <person name="Gabel C."/>
            <person name="Fuchs M."/>
            <person name="Fartmann B."/>
            <person name="Granderath K."/>
            <person name="Dauner D."/>
            <person name="Herzl A."/>
            <person name="Neumann S."/>
            <person name="Argiriou A."/>
            <person name="Vitale D."/>
            <person name="Liguori R."/>
            <person name="Piravandi E."/>
            <person name="Massenet O."/>
            <person name="Quigley F."/>
            <person name="Clabauld G."/>
            <person name="Muendlein A."/>
            <person name="Felber R."/>
            <person name="Schnabl S."/>
            <person name="Hiller R."/>
            <person name="Schmidt W."/>
            <person name="Lecharny A."/>
            <person name="Aubourg S."/>
            <person name="Chefdor F."/>
            <person name="Cooke R."/>
            <person name="Berger C."/>
            <person name="Monfort A."/>
            <person name="Casacuberta E."/>
            <person name="Gibbons T."/>
            <person name="Weber N."/>
            <person name="Vandenbol M."/>
            <person name="Bargues M."/>
            <person name="Terol J."/>
            <person name="Torres A."/>
            <person name="Perez-Perez A."/>
            <person name="Purnelle B."/>
            <person name="Bent E."/>
            <person name="Johnson S."/>
            <person name="Tacon D."/>
            <person name="Jesse T."/>
            <person name="Heijnen L."/>
            <person name="Schwarz S."/>
            <person name="Scholler P."/>
            <person name="Heber S."/>
            <person name="Francs P."/>
            <person name="Bielke C."/>
            <person name="Frishman D."/>
            <person name="Haase D."/>
            <person name="Lemcke K."/>
            <person name="Mewes H.-W."/>
            <person name="Stocker S."/>
            <person name="Zaccaria P."/>
            <person name="Bevan M."/>
            <person name="Wilson R.K."/>
            <person name="de la Bastide M."/>
            <person name="Habermann K."/>
            <person name="Parnell L."/>
            <person name="Dedhia N."/>
            <person name="Gnoj L."/>
            <person name="Schutz K."/>
            <person name="Huang E."/>
            <person name="Spiegel L."/>
            <person name="Sekhon M."/>
            <person name="Murray J."/>
            <person name="Sheet P."/>
            <person name="Cordes M."/>
            <person name="Abu-Threideh J."/>
            <person name="Stoneking T."/>
            <person name="Kalicki J."/>
            <person name="Graves T."/>
            <person name="Harmon G."/>
            <person name="Edwards J."/>
            <person name="Latreille P."/>
            <person name="Courtney L."/>
            <person name="Cloud J."/>
            <person name="Abbott A."/>
            <person name="Scott K."/>
            <person name="Johnson D."/>
            <person name="Minx P."/>
            <person name="Bentley D."/>
            <person name="Fulton B."/>
            <person name="Miller N."/>
            <person name="Greco T."/>
            <person name="Kemp K."/>
            <person name="Kramer J."/>
            <person name="Fulton L."/>
            <person name="Mardis E."/>
            <person name="Dante M."/>
            <person name="Pepin K."/>
            <person name="Hillier L.W."/>
            <person name="Nelson J."/>
            <person name="Spieth J."/>
            <person name="Ryan E."/>
            <person name="Andrews S."/>
            <person name="Geisel C."/>
            <person name="Layman D."/>
            <person name="Du H."/>
            <person name="Ali J."/>
            <person name="Berghoff A."/>
            <person name="Jones K."/>
            <person name="Drone K."/>
            <person name="Cotton M."/>
            <person name="Joshu C."/>
            <person name="Antonoiu B."/>
            <person name="Zidanic M."/>
            <person name="Strong C."/>
            <person name="Sun H."/>
            <person name="Lamar B."/>
            <person name="Yordan C."/>
            <person name="Ma P."/>
            <person name="Zhong J."/>
            <person name="Preston R."/>
            <person name="Vil D."/>
            <person name="Shekher M."/>
            <person name="Matero A."/>
            <person name="Shah R."/>
            <person name="Swaby I.K."/>
            <person name="O'Shaughnessy A."/>
            <person name="Rodriguez M."/>
            <person name="Hoffman J."/>
            <person name="Till S."/>
            <person name="Granat S."/>
            <person name="Shohdy N."/>
            <person name="Hasegawa A."/>
            <person name="Hameed A."/>
            <person name="Lodhi M."/>
            <person name="Johnson A."/>
            <person name="Chen E."/>
            <person name="Marra M.A."/>
            <person name="Martienssen R."/>
            <person name="McCombie W.R."/>
        </authorList>
    </citation>
    <scope>NUCLEOTIDE SEQUENCE [LARGE SCALE GENOMIC DNA]</scope>
    <source>
        <strain>cv. Columbia</strain>
    </source>
</reference>
<reference key="3">
    <citation type="journal article" date="2017" name="Plant J.">
        <title>Araport11: a complete reannotation of the Arabidopsis thaliana reference genome.</title>
        <authorList>
            <person name="Cheng C.Y."/>
            <person name="Krishnakumar V."/>
            <person name="Chan A.P."/>
            <person name="Thibaud-Nissen F."/>
            <person name="Schobel S."/>
            <person name="Town C.D."/>
        </authorList>
    </citation>
    <scope>GENOME REANNOTATION</scope>
    <source>
        <strain>cv. Columbia</strain>
    </source>
</reference>
<reference key="4">
    <citation type="journal article" date="2003" name="Science">
        <title>Empirical analysis of transcriptional activity in the Arabidopsis genome.</title>
        <authorList>
            <person name="Yamada K."/>
            <person name="Lim J."/>
            <person name="Dale J.M."/>
            <person name="Chen H."/>
            <person name="Shinn P."/>
            <person name="Palm C.J."/>
            <person name="Southwick A.M."/>
            <person name="Wu H.C."/>
            <person name="Kim C.J."/>
            <person name="Nguyen M."/>
            <person name="Pham P.K."/>
            <person name="Cheuk R.F."/>
            <person name="Karlin-Newmann G."/>
            <person name="Liu S.X."/>
            <person name="Lam B."/>
            <person name="Sakano H."/>
            <person name="Wu T."/>
            <person name="Yu G."/>
            <person name="Miranda M."/>
            <person name="Quach H.L."/>
            <person name="Tripp M."/>
            <person name="Chang C.H."/>
            <person name="Lee J.M."/>
            <person name="Toriumi M.J."/>
            <person name="Chan M.M."/>
            <person name="Tang C.C."/>
            <person name="Onodera C.S."/>
            <person name="Deng J.M."/>
            <person name="Akiyama K."/>
            <person name="Ansari Y."/>
            <person name="Arakawa T."/>
            <person name="Banh J."/>
            <person name="Banno F."/>
            <person name="Bowser L."/>
            <person name="Brooks S.Y."/>
            <person name="Carninci P."/>
            <person name="Chao Q."/>
            <person name="Choy N."/>
            <person name="Enju A."/>
            <person name="Goldsmith A.D."/>
            <person name="Gurjal M."/>
            <person name="Hansen N.F."/>
            <person name="Hayashizaki Y."/>
            <person name="Johnson-Hopson C."/>
            <person name="Hsuan V.W."/>
            <person name="Iida K."/>
            <person name="Karnes M."/>
            <person name="Khan S."/>
            <person name="Koesema E."/>
            <person name="Ishida J."/>
            <person name="Jiang P.X."/>
            <person name="Jones T."/>
            <person name="Kawai J."/>
            <person name="Kamiya A."/>
            <person name="Meyers C."/>
            <person name="Nakajima M."/>
            <person name="Narusaka M."/>
            <person name="Seki M."/>
            <person name="Sakurai T."/>
            <person name="Satou M."/>
            <person name="Tamse R."/>
            <person name="Vaysberg M."/>
            <person name="Wallender E.K."/>
            <person name="Wong C."/>
            <person name="Yamamura Y."/>
            <person name="Yuan S."/>
            <person name="Shinozaki K."/>
            <person name="Davis R.W."/>
            <person name="Theologis A."/>
            <person name="Ecker J.R."/>
        </authorList>
    </citation>
    <scope>NUCLEOTIDE SEQUENCE [LARGE SCALE MRNA] (ISOFORM 2)</scope>
    <source>
        <strain>cv. Columbia</strain>
    </source>
</reference>
<reference key="5">
    <citation type="journal article" date="2001" name="Plant Physiol.">
        <title>Phylogenetic relationships within cation transporter families of Arabidopsis.</title>
        <authorList>
            <person name="Maeser P."/>
            <person name="Thomine S."/>
            <person name="Schroeder J.I."/>
            <person name="Ward J.M."/>
            <person name="Hirschi K."/>
            <person name="Sze H."/>
            <person name="Talke I.N."/>
            <person name="Amtmann A."/>
            <person name="Maathuis F.J.M."/>
            <person name="Sanders D."/>
            <person name="Harper J.F."/>
            <person name="Tchieu J."/>
            <person name="Gribskov M."/>
            <person name="Persans M.W."/>
            <person name="Salt D.E."/>
            <person name="Kim S.A."/>
            <person name="Guerinot M.L."/>
        </authorList>
    </citation>
    <scope>GENE FAMILY</scope>
    <scope>NOMENCLATURE</scope>
</reference>
<reference key="6">
    <citation type="journal article" date="2008" name="PLoS ONE">
        <title>Sorting signals, N-terminal modifications and abundance of the chloroplast proteome.</title>
        <authorList>
            <person name="Zybailov B."/>
            <person name="Rutschow H."/>
            <person name="Friso G."/>
            <person name="Rudella A."/>
            <person name="Emanuelsson O."/>
            <person name="Sun Q."/>
            <person name="van Wijk K.J."/>
        </authorList>
    </citation>
    <scope>IDENTIFICATION BY MASS SPECTROMETRY</scope>
    <scope>SUBCELLULAR LOCATION [LARGE SCALE ANALYSIS]</scope>
</reference>
<reference key="7">
    <citation type="journal article" date="2013" name="PLoS ONE">
        <title>A novel AtKEA gene family, homolog of bacterial K+/H+ antiporters, plays potential roles in K+ homeostasis and osmotic adjustment in Arabidopsis.</title>
        <authorList>
            <person name="Zheng S."/>
            <person name="Pan T."/>
            <person name="Fan L."/>
            <person name="Qiu Q.S."/>
        </authorList>
    </citation>
    <scope>FUNCTION</scope>
    <scope>GENE FAMILY</scope>
    <scope>TISSUE SPECIFICITY</scope>
    <scope>INDUCTION</scope>
    <scope>SUBCELLULAR LOCATION</scope>
    <scope>TRANSPORTER ACTIVITY</scope>
    <scope>BIOPHYSICOCHEMICAL PROPERTIES</scope>
</reference>
<reference key="8">
    <citation type="journal article" date="2014" name="Nat. Commun.">
        <title>Ion antiport accelerates photosynthetic acclimation in fluctuating light environments.</title>
        <authorList>
            <person name="Armbruster U."/>
            <person name="Carrillo L.R."/>
            <person name="Venema K."/>
            <person name="Pavlovic L."/>
            <person name="Schmidtmann E."/>
            <person name="Kornfeld A."/>
            <person name="Jahns P."/>
            <person name="Berry J.A."/>
            <person name="Kramer D.M."/>
            <person name="Jonikas M.C."/>
        </authorList>
    </citation>
    <scope>FUNCTION</scope>
    <scope>ALTERNATIVE SPLICING</scope>
    <scope>SUBCELLULAR LOCATION</scope>
    <scope>DISRUPTION PHENOTYPE</scope>
    <scope>TRANSPORTER ACTIVITY</scope>
</reference>
<reference key="9">
    <citation type="journal article" date="2014" name="Proc. Natl. Acad. Sci. U.S.A.">
        <title>Plastidial transporters KEA1, -2, and -3 are essential for chloroplast osmoregulation, integrity, and pH regulation in Arabidopsis.</title>
        <authorList>
            <person name="Kunz H.H."/>
            <person name="Gierth M."/>
            <person name="Herdean A."/>
            <person name="Satoh-Cruz M."/>
            <person name="Kramer D.M."/>
            <person name="Spetea C."/>
            <person name="Schroeder J.I."/>
        </authorList>
    </citation>
    <scope>SUBCELLULAR LOCATION</scope>
    <scope>DISRUPTION PHENOTYPE</scope>
</reference>
<reference key="10">
    <citation type="journal article" date="2016" name="Proc. Natl. Acad. Sci. U.S.A.">
        <title>Rapid hyperosmotic-induced Ca2+ responses in Arabidopsis thaliana exhibit sensory potentiation and involvement of plastidial KEA transporters.</title>
        <authorList>
            <person name="Stephan A.B."/>
            <person name="Kunz H.-H."/>
            <person name="Yang E."/>
            <person name="Schroeder J.I."/>
        </authorList>
    </citation>
    <scope>FUNCTION</scope>
    <scope>DISRUPTION PHENOTYPE</scope>
    <source>
        <strain>cv. Columbia</strain>
    </source>
</reference>
<reference key="11">
    <citation type="journal article" date="2017" name="Plant J.">
        <title>Fine-tuned regulation of the K+ /H+ antiporter KEA3 is required to optimize photosynthesis during induction.</title>
        <authorList>
            <person name="Wang C."/>
            <person name="Yamamoto H."/>
            <person name="Narumiya F."/>
            <person name="Munekage Y.N."/>
            <person name="Finazzi G."/>
            <person name="Szabo I."/>
            <person name="Shikanai T."/>
        </authorList>
    </citation>
    <scope>FUNCTION</scope>
    <scope>MUTAGENESIS OF GLY-422</scope>
    <scope>DISRUPTION PHENOTYPE</scope>
    <scope>SUBCELLULAR LOCATION</scope>
    <scope>TOPOLOGY</scope>
    <source>
        <strain>cv. Columbia GL1</strain>
    </source>
</reference>
<reference key="12">
    <citation type="journal article" date="2019" name="Plant Physiol.">
        <title>Photosynthesis in Arabidopsis is unaffected by the function of the vacuolar K+ channel TPK3.</title>
        <authorList>
            <person name="Hoehner R."/>
            <person name="Galvis V.C."/>
            <person name="Strand D.D."/>
            <person name="Voelkner C."/>
            <person name="Kraemer M."/>
            <person name="Messer M."/>
            <person name="Dinc F."/>
            <person name="Sjuts I."/>
            <person name="Boelter B."/>
            <person name="Kramer D.M."/>
            <person name="Armbruster U."/>
            <person name="Kunz H.-H."/>
        </authorList>
    </citation>
    <scope>FUNCTION</scope>
    <scope>DISRUPTION PHENOTYPE</scope>
    <scope>TISSUE SPECIFICITY</scope>
    <scope>SUBCELLULAR LOCATION</scope>
    <source>
        <strain>cv. Columbia</strain>
    </source>
</reference>
<reference key="13">
    <citation type="journal article" date="2019" name="Plant Physiol.">
        <title>Modification of activity of the thylakoid H+/K+ antiporter KEA3 disturbs delta-pH-dependent regulation of photosynthesis.</title>
        <authorList>
            <person name="Wang C."/>
            <person name="Shikanai T."/>
        </authorList>
    </citation>
    <scope>FUNCTION</scope>
    <scope>MUTAGENESIS OF GLY-422</scope>
    <scope>DISRUPTION PHENOTYPE</scope>
    <scope>REVIEW ON KEA3</scope>
    <source>
        <strain>cv. Columbia GL1</strain>
    </source>
</reference>
<reference key="14">
    <citation type="journal article" date="2019" name="Sci. Rep.">
        <title>K+ and Cl- channels/transporters independently fine-tune photosynthesis in plants.</title>
        <authorList>
            <person name="Dukic E."/>
            <person name="Herdean A."/>
            <person name="Cheregi O."/>
            <person name="Sharma A."/>
            <person name="Nziengui H."/>
            <person name="Dmitruk D."/>
            <person name="Solymosi K."/>
            <person name="Pribil M."/>
            <person name="Spetea C."/>
        </authorList>
    </citation>
    <scope>FUNCTION</scope>
    <scope>DISRUPTION PHENOTYPE</scope>
    <source>
        <strain>cv. Columbia</strain>
    </source>
</reference>
<reference key="15">
    <citation type="journal article" date="2019" name="Sci. Rep.">
        <title>Evidence for potassium transport activity of Arabidopsis KEA1-KEA6.</title>
        <authorList>
            <person name="Tsujii M."/>
            <person name="Kera K."/>
            <person name="Hamamoto S."/>
            <person name="Kuromori T."/>
            <person name="Shikanai T."/>
            <person name="Uozumi N."/>
        </authorList>
    </citation>
    <scope>FUNCTION</scope>
    <scope>TRANSPORTER ACTIVITY</scope>
    <scope>MUTAGENESIS OF GLN-273 AND GLY-422</scope>
    <scope>GENE FAMILY</scope>
    <scope>NOMENCLATURE</scope>
    <source>
        <strain>cv. Columbia</strain>
    </source>
</reference>
<reference key="16">
    <citation type="journal article" date="2020" name="Plant Physiol.">
        <title>H+ transport by K+ EXCHANGE ANTIPORTER3 promotes photosynthesis and growth in chloroplast ATP synthase mutants.</title>
        <authorList>
            <person name="Correa Galvis V."/>
            <person name="Strand D.D."/>
            <person name="Messer M."/>
            <person name="Thiele W."/>
            <person name="Bethmann S."/>
            <person name="Huebner D."/>
            <person name="Uflewski M."/>
            <person name="Kaiser E."/>
            <person name="Siemiatkowska B."/>
            <person name="Morris B.A."/>
            <person name="Toth S.Z."/>
            <person name="Watanabe M."/>
            <person name="Brueckner F."/>
            <person name="Hoefgen R."/>
            <person name="Jahns P."/>
            <person name="Schoettler M.A."/>
            <person name="Armbruster U."/>
        </authorList>
    </citation>
    <scope>FUNCTION</scope>
    <scope>DISRUPTION PHENOTYPE</scope>
    <scope>SUBCELLULAR LOCATION</scope>
    <source>
        <strain>cv. Columbia</strain>
    </source>
</reference>
<reference key="17">
    <citation type="journal article" date="2020" name="Plant Physiol.">
        <title>Collaboration between NDH and KEA3 allows maximally efficient photosynthesis after a long dark adaptation.</title>
        <authorList>
            <person name="Basso L."/>
            <person name="Yamori W."/>
            <person name="Szabo I."/>
            <person name="Shikanai T."/>
        </authorList>
    </citation>
    <scope>FUNCTION</scope>
    <scope>DISRUPTION PHENOTYPE</scope>
    <source>
        <strain>cv. Columbia GL1</strain>
    </source>
</reference>
<feature type="transit peptide" description="Chloroplast" evidence="1">
    <location>
        <begin position="1"/>
        <end position="72"/>
    </location>
</feature>
<feature type="chain" id="PRO_0000395099" description="K(+) efflux antiporter 3, chloroplastic">
    <location>
        <begin position="73"/>
        <end position="776"/>
    </location>
</feature>
<feature type="topological domain" description="Lumenal, thylakoid" evidence="24">
    <location>
        <begin position="73"/>
        <end position="93"/>
    </location>
</feature>
<feature type="transmembrane region" description="Helical; Name=1" evidence="1">
    <location>
        <begin position="94"/>
        <end position="114"/>
    </location>
</feature>
<feature type="topological domain" description="Stromal" evidence="24">
    <location>
        <position position="115"/>
    </location>
</feature>
<feature type="transmembrane region" description="Helical; Name=2" evidence="1">
    <location>
        <begin position="116"/>
        <end position="136"/>
    </location>
</feature>
<feature type="topological domain" description="Lumenal, thylakoid" evidence="24">
    <location>
        <begin position="137"/>
        <end position="153"/>
    </location>
</feature>
<feature type="transmembrane region" description="Helical; Name=3" evidence="1">
    <location>
        <begin position="154"/>
        <end position="174"/>
    </location>
</feature>
<feature type="topological domain" description="Stromal" evidence="24">
    <location>
        <begin position="175"/>
        <end position="181"/>
    </location>
</feature>
<feature type="transmembrane region" description="Helical; Name=4" evidence="1">
    <location>
        <begin position="182"/>
        <end position="202"/>
    </location>
</feature>
<feature type="topological domain" description="Lumenal, thylakoid" evidence="24">
    <location>
        <begin position="203"/>
        <end position="232"/>
    </location>
</feature>
<feature type="transmembrane region" description="Helical; Name=5" evidence="1">
    <location>
        <begin position="233"/>
        <end position="253"/>
    </location>
</feature>
<feature type="topological domain" description="Stromal" evidence="24">
    <location>
        <begin position="254"/>
        <end position="266"/>
    </location>
</feature>
<feature type="transmembrane region" description="Helical; Name=6" evidence="1">
    <location>
        <begin position="267"/>
        <end position="287"/>
    </location>
</feature>
<feature type="topological domain" description="Lumenal, thylakoid" evidence="24">
    <location>
        <begin position="288"/>
        <end position="296"/>
    </location>
</feature>
<feature type="transmembrane region" description="Helical; Name=7" evidence="1">
    <location>
        <begin position="297"/>
        <end position="317"/>
    </location>
</feature>
<feature type="topological domain" description="Stromal" evidence="24">
    <location>
        <begin position="318"/>
        <end position="338"/>
    </location>
</feature>
<feature type="transmembrane region" description="Helical; Name=8" evidence="1">
    <location>
        <begin position="339"/>
        <end position="359"/>
    </location>
</feature>
<feature type="topological domain" description="Lumenal, thylakoid" evidence="24">
    <location>
        <begin position="360"/>
        <end position="389"/>
    </location>
</feature>
<feature type="transmembrane region" description="Helical; Name=9" evidence="1">
    <location>
        <begin position="390"/>
        <end position="410"/>
    </location>
</feature>
<feature type="topological domain" description="Stromal" evidence="24">
    <location>
        <begin position="411"/>
        <end position="415"/>
    </location>
</feature>
<feature type="transmembrane region" description="Helical; Name=10" evidence="1">
    <location>
        <begin position="416"/>
        <end position="436"/>
    </location>
</feature>
<feature type="topological domain" description="Lumenal, thylakoid" evidence="24">
    <location>
        <begin position="437"/>
        <end position="445"/>
    </location>
</feature>
<feature type="transmembrane region" description="Helical; Name=11" evidence="1">
    <location>
        <begin position="446"/>
        <end position="466"/>
    </location>
</feature>
<feature type="topological domain" description="Stromal" evidence="24">
    <location>
        <begin position="467"/>
        <end position="468"/>
    </location>
</feature>
<feature type="transmembrane region" description="Helical; Name=12" evidence="1">
    <location>
        <begin position="469"/>
        <end position="489"/>
    </location>
</feature>
<feature type="topological domain" description="Lumenal, thylakoid" evidence="24">
    <location>
        <begin position="490"/>
        <end position="526"/>
    </location>
</feature>
<feature type="transmembrane region" description="Helical; Name=13" evidence="1">
    <location>
        <begin position="527"/>
        <end position="547"/>
    </location>
</feature>
<feature type="topological domain" description="Stromal" evidence="24">
    <location>
        <begin position="548"/>
        <end position="776"/>
    </location>
</feature>
<feature type="domain" description="RCK N-terminal" evidence="2">
    <location>
        <begin position="524"/>
        <end position="649"/>
    </location>
</feature>
<feature type="region of interest" description="Disordered" evidence="3">
    <location>
        <begin position="728"/>
        <end position="776"/>
    </location>
</feature>
<feature type="splice variant" id="VSP_039359" description="In isoform 2." evidence="18">
    <location>
        <begin position="1"/>
        <end position="149"/>
    </location>
</feature>
<feature type="splice variant" id="VSP_039360" description="In isoform 2." evidence="18">
    <original>TDVKVLSEWGILFL</original>
    <variation>MSSNDWPYPDYLWQ</variation>
    <location>
        <begin position="150"/>
        <end position="163"/>
    </location>
</feature>
<feature type="splice variant" id="VSP_061802" description="In isoform 4.">
    <original>KIG</original>
    <variation>VKM</variation>
    <location>
        <begin position="514"/>
        <end position="516"/>
    </location>
</feature>
<feature type="splice variant" id="VSP_061803" description="In isoform 4.">
    <location>
        <begin position="517"/>
        <end position="776"/>
    </location>
</feature>
<feature type="splice variant" id="VSP_039361" description="In isoform 2 and isoform 3." evidence="18">
    <original>SPIYARAQDLPHLL</original>
    <variation>VISLFLLPFVNKIV</variation>
    <location>
        <begin position="624"/>
        <end position="637"/>
    </location>
</feature>
<feature type="splice variant" id="VSP_039362" description="In isoform 2 and isoform 3." evidence="18">
    <location>
        <begin position="638"/>
        <end position="776"/>
    </location>
</feature>
<feature type="mutagenesis site" description="No impact on K(+)/H(+) efflux antiporter activity." evidence="13">
    <original>Q</original>
    <variation>D</variation>
    <location>
        <position position="273"/>
    </location>
</feature>
<feature type="mutagenesis site" description="In dpgr; dominant allele conferring disturbed transport activity. Enhanced K(+)/H(+) efflux antiporter activity. Exhibits reduced non-photochemical quenching (NPQ) in artificial (CO(2)-free with low O(2)) air leading to high chlorophyll fluorescence. In ambient air, reduced NPQ is observed during induction of photosynthesis, especially after overnight dark adaptation. Reduced plant growth." evidence="10 13 14">
    <original>G</original>
    <variation>R</variation>
    <location>
        <position position="422"/>
    </location>
</feature>
<evidence type="ECO:0000255" key="1"/>
<evidence type="ECO:0000255" key="2">
    <source>
        <dbReference type="PROSITE-ProRule" id="PRU00543"/>
    </source>
</evidence>
<evidence type="ECO:0000256" key="3">
    <source>
        <dbReference type="SAM" id="MobiDB-lite"/>
    </source>
</evidence>
<evidence type="ECO:0000269" key="4">
    <source>
    </source>
</evidence>
<evidence type="ECO:0000269" key="5">
    <source>
    </source>
</evidence>
<evidence type="ECO:0000269" key="6">
    <source>
    </source>
</evidence>
<evidence type="ECO:0000269" key="7">
    <source>
    </source>
</evidence>
<evidence type="ECO:0000269" key="8">
    <source>
    </source>
</evidence>
<evidence type="ECO:0000269" key="9">
    <source>
    </source>
</evidence>
<evidence type="ECO:0000269" key="10">
    <source>
    </source>
</evidence>
<evidence type="ECO:0000269" key="11">
    <source>
    </source>
</evidence>
<evidence type="ECO:0000269" key="12">
    <source>
    </source>
</evidence>
<evidence type="ECO:0000269" key="13">
    <source>
    </source>
</evidence>
<evidence type="ECO:0000269" key="14">
    <source>
    </source>
</evidence>
<evidence type="ECO:0000269" key="15">
    <source>
    </source>
</evidence>
<evidence type="ECO:0000269" key="16">
    <source>
    </source>
</evidence>
<evidence type="ECO:0000303" key="17">
    <source>
    </source>
</evidence>
<evidence type="ECO:0000303" key="18">
    <source>
    </source>
</evidence>
<evidence type="ECO:0000303" key="19">
    <source>
    </source>
</evidence>
<evidence type="ECO:0000303" key="20">
    <source>
    </source>
</evidence>
<evidence type="ECO:0000303" key="21">
    <source>
    </source>
</evidence>
<evidence type="ECO:0000305" key="22"/>
<evidence type="ECO:0000305" key="23">
    <source>
    </source>
</evidence>
<evidence type="ECO:0000305" key="24">
    <source>
    </source>
</evidence>
<evidence type="ECO:0000312" key="25">
    <source>
        <dbReference type="Araport" id="AT4G04850"/>
    </source>
</evidence>
<evidence type="ECO:0000312" key="26">
    <source>
        <dbReference type="EMBL" id="AAD03448.1"/>
    </source>
</evidence>